<evidence type="ECO:0000250" key="1"/>
<evidence type="ECO:0000305" key="2"/>
<dbReference type="EC" id="1.1.1.23"/>
<dbReference type="EMBL" id="AE000782">
    <property type="protein sequence ID" value="AAB91021.1"/>
    <property type="molecule type" value="Genomic_DNA"/>
</dbReference>
<dbReference type="PIR" id="D69276">
    <property type="entry name" value="D69276"/>
</dbReference>
<dbReference type="RefSeq" id="WP_010877723.1">
    <property type="nucleotide sequence ID" value="NC_000917.1"/>
</dbReference>
<dbReference type="SMR" id="O30027"/>
<dbReference type="STRING" id="224325.AF_0212"/>
<dbReference type="PaxDb" id="224325-AF_0212"/>
<dbReference type="EnsemblBacteria" id="AAB91021">
    <property type="protein sequence ID" value="AAB91021"/>
    <property type="gene ID" value="AF_0212"/>
</dbReference>
<dbReference type="GeneID" id="24793746"/>
<dbReference type="KEGG" id="afu:AF_0212"/>
<dbReference type="eggNOG" id="arCOG04352">
    <property type="taxonomic scope" value="Archaea"/>
</dbReference>
<dbReference type="HOGENOM" id="CLU_006732_3_0_2"/>
<dbReference type="OrthoDB" id="36308at2157"/>
<dbReference type="PhylomeDB" id="O30027"/>
<dbReference type="UniPathway" id="UPA00031">
    <property type="reaction ID" value="UER00014"/>
</dbReference>
<dbReference type="Proteomes" id="UP000002199">
    <property type="component" value="Chromosome"/>
</dbReference>
<dbReference type="GO" id="GO:0005737">
    <property type="term" value="C:cytoplasm"/>
    <property type="evidence" value="ECO:0007669"/>
    <property type="project" value="TreeGrafter"/>
</dbReference>
<dbReference type="GO" id="GO:0004399">
    <property type="term" value="F:histidinol dehydrogenase activity"/>
    <property type="evidence" value="ECO:0007669"/>
    <property type="project" value="UniProtKB-UniRule"/>
</dbReference>
<dbReference type="GO" id="GO:0051287">
    <property type="term" value="F:NAD binding"/>
    <property type="evidence" value="ECO:0007669"/>
    <property type="project" value="InterPro"/>
</dbReference>
<dbReference type="GO" id="GO:0008270">
    <property type="term" value="F:zinc ion binding"/>
    <property type="evidence" value="ECO:0007669"/>
    <property type="project" value="UniProtKB-UniRule"/>
</dbReference>
<dbReference type="GO" id="GO:0000105">
    <property type="term" value="P:L-histidine biosynthetic process"/>
    <property type="evidence" value="ECO:0007669"/>
    <property type="project" value="UniProtKB-UniRule"/>
</dbReference>
<dbReference type="CDD" id="cd06572">
    <property type="entry name" value="Histidinol_dh"/>
    <property type="match status" value="1"/>
</dbReference>
<dbReference type="FunFam" id="3.40.50.1980:FF:000001">
    <property type="entry name" value="Histidinol dehydrogenase"/>
    <property type="match status" value="1"/>
</dbReference>
<dbReference type="FunFam" id="3.40.50.1980:FF:000026">
    <property type="entry name" value="Histidinol dehydrogenase"/>
    <property type="match status" value="1"/>
</dbReference>
<dbReference type="Gene3D" id="1.20.5.1300">
    <property type="match status" value="1"/>
</dbReference>
<dbReference type="Gene3D" id="3.40.50.1980">
    <property type="entry name" value="Nitrogenase molybdenum iron protein domain"/>
    <property type="match status" value="2"/>
</dbReference>
<dbReference type="HAMAP" id="MF_01024">
    <property type="entry name" value="HisD"/>
    <property type="match status" value="1"/>
</dbReference>
<dbReference type="InterPro" id="IPR016161">
    <property type="entry name" value="Ald_DH/histidinol_DH"/>
</dbReference>
<dbReference type="InterPro" id="IPR001692">
    <property type="entry name" value="Histidinol_DH_CS"/>
</dbReference>
<dbReference type="InterPro" id="IPR022695">
    <property type="entry name" value="Histidinol_DH_monofunct"/>
</dbReference>
<dbReference type="InterPro" id="IPR012131">
    <property type="entry name" value="Hstdl_DH"/>
</dbReference>
<dbReference type="NCBIfam" id="TIGR00069">
    <property type="entry name" value="hisD"/>
    <property type="match status" value="1"/>
</dbReference>
<dbReference type="PANTHER" id="PTHR21256:SF2">
    <property type="entry name" value="HISTIDINE BIOSYNTHESIS TRIFUNCTIONAL PROTEIN"/>
    <property type="match status" value="1"/>
</dbReference>
<dbReference type="PANTHER" id="PTHR21256">
    <property type="entry name" value="HISTIDINOL DEHYDROGENASE HDH"/>
    <property type="match status" value="1"/>
</dbReference>
<dbReference type="Pfam" id="PF00815">
    <property type="entry name" value="Histidinol_dh"/>
    <property type="match status" value="1"/>
</dbReference>
<dbReference type="PIRSF" id="PIRSF000099">
    <property type="entry name" value="Histidinol_dh"/>
    <property type="match status" value="1"/>
</dbReference>
<dbReference type="PRINTS" id="PR00083">
    <property type="entry name" value="HOLDHDRGNASE"/>
</dbReference>
<dbReference type="SUPFAM" id="SSF53720">
    <property type="entry name" value="ALDH-like"/>
    <property type="match status" value="1"/>
</dbReference>
<dbReference type="PROSITE" id="PS00611">
    <property type="entry name" value="HISOL_DEHYDROGENASE"/>
    <property type="match status" value="1"/>
</dbReference>
<proteinExistence type="inferred from homology"/>
<feature type="chain" id="PRO_0000135890" description="Histidinol dehydrogenase">
    <location>
        <begin position="1"/>
        <end position="404"/>
    </location>
</feature>
<feature type="active site" description="Proton acceptor" evidence="1">
    <location>
        <position position="300"/>
    </location>
</feature>
<feature type="active site" description="Proton acceptor" evidence="1">
    <location>
        <position position="301"/>
    </location>
</feature>
<feature type="binding site" evidence="1">
    <location>
        <position position="114"/>
    </location>
    <ligand>
        <name>NAD(+)</name>
        <dbReference type="ChEBI" id="CHEBI:57540"/>
    </ligand>
</feature>
<feature type="binding site" evidence="1">
    <location>
        <position position="176"/>
    </location>
    <ligand>
        <name>NAD(+)</name>
        <dbReference type="ChEBI" id="CHEBI:57540"/>
    </ligand>
</feature>
<feature type="binding site" evidence="1">
    <location>
        <position position="199"/>
    </location>
    <ligand>
        <name>NAD(+)</name>
        <dbReference type="ChEBI" id="CHEBI:57540"/>
    </ligand>
</feature>
<feature type="binding site" evidence="1">
    <location>
        <position position="222"/>
    </location>
    <ligand>
        <name>substrate</name>
    </ligand>
</feature>
<feature type="binding site" evidence="1">
    <location>
        <position position="244"/>
    </location>
    <ligand>
        <name>substrate</name>
    </ligand>
</feature>
<feature type="binding site" evidence="1">
    <location>
        <position position="244"/>
    </location>
    <ligand>
        <name>Zn(2+)</name>
        <dbReference type="ChEBI" id="CHEBI:29105"/>
    </ligand>
</feature>
<feature type="binding site" evidence="1">
    <location>
        <position position="247"/>
    </location>
    <ligand>
        <name>substrate</name>
    </ligand>
</feature>
<feature type="binding site" evidence="1">
    <location>
        <position position="247"/>
    </location>
    <ligand>
        <name>Zn(2+)</name>
        <dbReference type="ChEBI" id="CHEBI:29105"/>
    </ligand>
</feature>
<feature type="binding site" evidence="1">
    <location>
        <position position="301"/>
    </location>
    <ligand>
        <name>substrate</name>
    </ligand>
</feature>
<feature type="binding site" evidence="1">
    <location>
        <position position="334"/>
    </location>
    <ligand>
        <name>substrate</name>
    </ligand>
</feature>
<feature type="binding site" evidence="1">
    <location>
        <position position="334"/>
    </location>
    <ligand>
        <name>Zn(2+)</name>
        <dbReference type="ChEBI" id="CHEBI:29105"/>
    </ligand>
</feature>
<feature type="binding site" evidence="1">
    <location>
        <position position="388"/>
    </location>
    <ligand>
        <name>substrate</name>
    </ligand>
</feature>
<feature type="binding site" evidence="1">
    <location>
        <position position="393"/>
    </location>
    <ligand>
        <name>substrate</name>
    </ligand>
</feature>
<feature type="binding site" evidence="1">
    <location>
        <position position="393"/>
    </location>
    <ligand>
        <name>Zn(2+)</name>
        <dbReference type="ChEBI" id="CHEBI:29105"/>
    </ligand>
</feature>
<reference key="1">
    <citation type="journal article" date="1997" name="Nature">
        <title>The complete genome sequence of the hyperthermophilic, sulphate-reducing archaeon Archaeoglobus fulgidus.</title>
        <authorList>
            <person name="Klenk H.-P."/>
            <person name="Clayton R.A."/>
            <person name="Tomb J.-F."/>
            <person name="White O."/>
            <person name="Nelson K.E."/>
            <person name="Ketchum K.A."/>
            <person name="Dodson R.J."/>
            <person name="Gwinn M.L."/>
            <person name="Hickey E.K."/>
            <person name="Peterson J.D."/>
            <person name="Richardson D.L."/>
            <person name="Kerlavage A.R."/>
            <person name="Graham D.E."/>
            <person name="Kyrpides N.C."/>
            <person name="Fleischmann R.D."/>
            <person name="Quackenbush J."/>
            <person name="Lee N.H."/>
            <person name="Sutton G.G."/>
            <person name="Gill S.R."/>
            <person name="Kirkness E.F."/>
            <person name="Dougherty B.A."/>
            <person name="McKenney K."/>
            <person name="Adams M.D."/>
            <person name="Loftus B.J."/>
            <person name="Peterson S.N."/>
            <person name="Reich C.I."/>
            <person name="McNeil L.K."/>
            <person name="Badger J.H."/>
            <person name="Glodek A."/>
            <person name="Zhou L."/>
            <person name="Overbeek R."/>
            <person name="Gocayne J.D."/>
            <person name="Weidman J.F."/>
            <person name="McDonald L.A."/>
            <person name="Utterback T.R."/>
            <person name="Cotton M.D."/>
            <person name="Spriggs T."/>
            <person name="Artiach P."/>
            <person name="Kaine B.P."/>
            <person name="Sykes S.M."/>
            <person name="Sadow P.W."/>
            <person name="D'Andrea K.P."/>
            <person name="Bowman C."/>
            <person name="Fujii C."/>
            <person name="Garland S.A."/>
            <person name="Mason T.M."/>
            <person name="Olsen G.J."/>
            <person name="Fraser C.M."/>
            <person name="Smith H.O."/>
            <person name="Woese C.R."/>
            <person name="Venter J.C."/>
        </authorList>
    </citation>
    <scope>NUCLEOTIDE SEQUENCE [LARGE SCALE GENOMIC DNA]</scope>
    <source>
        <strain>ATCC 49558 / DSM 4304 / JCM 9628 / NBRC 100126 / VC-16</strain>
    </source>
</reference>
<keyword id="KW-0028">Amino-acid biosynthesis</keyword>
<keyword id="KW-0368">Histidine biosynthesis</keyword>
<keyword id="KW-0479">Metal-binding</keyword>
<keyword id="KW-0520">NAD</keyword>
<keyword id="KW-0560">Oxidoreductase</keyword>
<keyword id="KW-1185">Reference proteome</keyword>
<keyword id="KW-0862">Zinc</keyword>
<organism>
    <name type="scientific">Archaeoglobus fulgidus (strain ATCC 49558 / DSM 4304 / JCM 9628 / NBRC 100126 / VC-16)</name>
    <dbReference type="NCBI Taxonomy" id="224325"/>
    <lineage>
        <taxon>Archaea</taxon>
        <taxon>Methanobacteriati</taxon>
        <taxon>Methanobacteriota</taxon>
        <taxon>Archaeoglobi</taxon>
        <taxon>Archaeoglobales</taxon>
        <taxon>Archaeoglobaceae</taxon>
        <taxon>Archaeoglobus</taxon>
    </lineage>
</organism>
<protein>
    <recommendedName>
        <fullName>Histidinol dehydrogenase</fullName>
        <shortName>HDH</shortName>
        <ecNumber>1.1.1.23</ecNumber>
    </recommendedName>
</protein>
<sequence length="404" mass="44152">MEEILRLRRSVSIDDYIEKVKPIVEAVKREGDKAVIRFTRDLDGVELDSLRVTEDEFEKAYDAVDDGLIDALEVAKENIYRFHYVTSVERDMKVEFEDCVMGKIYTPIEKVGAYIPGGRASYPSTALMIGVPAKIAGVEKLVACTPPNKDGKVNPLTLVALDIAEFDEVYKAGGAQAIAAMAYGTETVEKVYKIVGPGNIYVTAAKLLVAKDVAIDMPAGPSEILVIADETANADFIACDCLAQLEHDPMAVAVVLTTSRKVADEVEKKVKSEGDFSNFAVFVVEDLAEAFEISNEFAPEHLTVAVKNPEEWLGKVRNAGSVFLGNFSPVAAGDYASGTNHVLPTAGYAKIYGGLSVESFLKHFTFQMLSEESMRRIGGDVVKIAEAEGLRWHAESVRKRLEKI</sequence>
<name>HISX_ARCFU</name>
<comment type="function">
    <text evidence="1">Catalyzes the sequential NAD-dependent oxidations of L-histidinol to L-histidinaldehyde and then to L-histidine.</text>
</comment>
<comment type="catalytic activity">
    <reaction>
        <text>L-histidinol + 2 NAD(+) + H2O = L-histidine + 2 NADH + 3 H(+)</text>
        <dbReference type="Rhea" id="RHEA:20641"/>
        <dbReference type="ChEBI" id="CHEBI:15377"/>
        <dbReference type="ChEBI" id="CHEBI:15378"/>
        <dbReference type="ChEBI" id="CHEBI:57540"/>
        <dbReference type="ChEBI" id="CHEBI:57595"/>
        <dbReference type="ChEBI" id="CHEBI:57699"/>
        <dbReference type="ChEBI" id="CHEBI:57945"/>
        <dbReference type="EC" id="1.1.1.23"/>
    </reaction>
</comment>
<comment type="cofactor">
    <cofactor evidence="1">
        <name>Zn(2+)</name>
        <dbReference type="ChEBI" id="CHEBI:29105"/>
    </cofactor>
    <text evidence="1">Binds 1 zinc ion per subunit.</text>
</comment>
<comment type="pathway">
    <text>Amino-acid biosynthesis; L-histidine biosynthesis; L-histidine from 5-phospho-alpha-D-ribose 1-diphosphate: step 9/9.</text>
</comment>
<comment type="similarity">
    <text evidence="2">Belongs to the histidinol dehydrogenase family.</text>
</comment>
<gene>
    <name type="primary">hisD</name>
    <name type="ordered locus">AF_0212</name>
</gene>
<accession>O30027</accession>